<organism>
    <name type="scientific">Rhodococcus jostii (strain RHA1)</name>
    <dbReference type="NCBI Taxonomy" id="101510"/>
    <lineage>
        <taxon>Bacteria</taxon>
        <taxon>Bacillati</taxon>
        <taxon>Actinomycetota</taxon>
        <taxon>Actinomycetes</taxon>
        <taxon>Mycobacteriales</taxon>
        <taxon>Nocardiaceae</taxon>
        <taxon>Rhodococcus</taxon>
    </lineage>
</organism>
<name>ISPD_RHOJR</name>
<accession>Q0S890</accession>
<protein>
    <recommendedName>
        <fullName evidence="1">2-C-methyl-D-erythritol 4-phosphate cytidylyltransferase</fullName>
        <ecNumber evidence="1">2.7.7.60</ecNumber>
    </recommendedName>
    <alternativeName>
        <fullName evidence="1">4-diphosphocytidyl-2C-methyl-D-erythritol synthase</fullName>
    </alternativeName>
    <alternativeName>
        <fullName evidence="1">MEP cytidylyltransferase</fullName>
        <shortName evidence="1">MCT</shortName>
    </alternativeName>
</protein>
<gene>
    <name evidence="1" type="primary">ispD</name>
    <name type="ordered locus">RHA1_ro04460</name>
</gene>
<comment type="function">
    <text evidence="1">Catalyzes the formation of 4-diphosphocytidyl-2-C-methyl-D-erythritol from CTP and 2-C-methyl-D-erythritol 4-phosphate (MEP).</text>
</comment>
<comment type="catalytic activity">
    <reaction evidence="1">
        <text>2-C-methyl-D-erythritol 4-phosphate + CTP + H(+) = 4-CDP-2-C-methyl-D-erythritol + diphosphate</text>
        <dbReference type="Rhea" id="RHEA:13429"/>
        <dbReference type="ChEBI" id="CHEBI:15378"/>
        <dbReference type="ChEBI" id="CHEBI:33019"/>
        <dbReference type="ChEBI" id="CHEBI:37563"/>
        <dbReference type="ChEBI" id="CHEBI:57823"/>
        <dbReference type="ChEBI" id="CHEBI:58262"/>
        <dbReference type="EC" id="2.7.7.60"/>
    </reaction>
</comment>
<comment type="pathway">
    <text evidence="1">Isoprenoid biosynthesis; isopentenyl diphosphate biosynthesis via DXP pathway; isopentenyl diphosphate from 1-deoxy-D-xylulose 5-phosphate: step 2/6.</text>
</comment>
<comment type="similarity">
    <text evidence="1">Belongs to the IspD/TarI cytidylyltransferase family. IspD subfamily.</text>
</comment>
<sequence length="226" mass="23512">MADGKGPVVALVPAAGQGVRLGENRPKAFVDLGGTTMLTRAVDGLLQSGAVDRVVVIVPEELVESTRTLLPGEVTVVAGGSERTDSVRAGLAVADDADYVLVHDAARALTPPSLIARVVEELRCGRNAVIPVLPVTDTIKTVDVLGAVTGTPERSELRAVQTPQGFTAELLRRAYAAADGIATDDAGLVERLGERVRSIVGEPTAFKITTPLDLVLARALVEEGAH</sequence>
<reference key="1">
    <citation type="journal article" date="2006" name="Proc. Natl. Acad. Sci. U.S.A.">
        <title>The complete genome of Rhodococcus sp. RHA1 provides insights into a catabolic powerhouse.</title>
        <authorList>
            <person name="McLeod M.P."/>
            <person name="Warren R.L."/>
            <person name="Hsiao W.W.L."/>
            <person name="Araki N."/>
            <person name="Myhre M."/>
            <person name="Fernandes C."/>
            <person name="Miyazawa D."/>
            <person name="Wong W."/>
            <person name="Lillquist A.L."/>
            <person name="Wang D."/>
            <person name="Dosanjh M."/>
            <person name="Hara H."/>
            <person name="Petrescu A."/>
            <person name="Morin R.D."/>
            <person name="Yang G."/>
            <person name="Stott J.M."/>
            <person name="Schein J.E."/>
            <person name="Shin H."/>
            <person name="Smailus D."/>
            <person name="Siddiqui A.S."/>
            <person name="Marra M.A."/>
            <person name="Jones S.J.M."/>
            <person name="Holt R."/>
            <person name="Brinkman F.S.L."/>
            <person name="Miyauchi K."/>
            <person name="Fukuda M."/>
            <person name="Davies J.E."/>
            <person name="Mohn W.W."/>
            <person name="Eltis L.D."/>
        </authorList>
    </citation>
    <scope>NUCLEOTIDE SEQUENCE [LARGE SCALE GENOMIC DNA]</scope>
    <source>
        <strain>RHA1</strain>
    </source>
</reference>
<evidence type="ECO:0000255" key="1">
    <source>
        <dbReference type="HAMAP-Rule" id="MF_00108"/>
    </source>
</evidence>
<feature type="chain" id="PRO_1000191067" description="2-C-methyl-D-erythritol 4-phosphate cytidylyltransferase">
    <location>
        <begin position="1"/>
        <end position="226"/>
    </location>
</feature>
<feature type="site" description="Transition state stabilizer" evidence="1">
    <location>
        <position position="20"/>
    </location>
</feature>
<feature type="site" description="Transition state stabilizer" evidence="1">
    <location>
        <position position="27"/>
    </location>
</feature>
<feature type="site" description="Positions MEP for the nucleophilic attack" evidence="1">
    <location>
        <position position="154"/>
    </location>
</feature>
<feature type="site" description="Positions MEP for the nucleophilic attack" evidence="1">
    <location>
        <position position="207"/>
    </location>
</feature>
<keyword id="KW-0414">Isoprene biosynthesis</keyword>
<keyword id="KW-0548">Nucleotidyltransferase</keyword>
<keyword id="KW-0808">Transferase</keyword>
<dbReference type="EC" id="2.7.7.60" evidence="1"/>
<dbReference type="EMBL" id="CP000431">
    <property type="protein sequence ID" value="ABG96246.1"/>
    <property type="molecule type" value="Genomic_DNA"/>
</dbReference>
<dbReference type="RefSeq" id="WP_011596855.1">
    <property type="nucleotide sequence ID" value="NC_008268.1"/>
</dbReference>
<dbReference type="SMR" id="Q0S890"/>
<dbReference type="KEGG" id="rha:RHA1_ro04460"/>
<dbReference type="eggNOG" id="COG1211">
    <property type="taxonomic scope" value="Bacteria"/>
</dbReference>
<dbReference type="HOGENOM" id="CLU_061281_1_1_11"/>
<dbReference type="OrthoDB" id="9802561at2"/>
<dbReference type="UniPathway" id="UPA00056">
    <property type="reaction ID" value="UER00093"/>
</dbReference>
<dbReference type="Proteomes" id="UP000008710">
    <property type="component" value="Chromosome"/>
</dbReference>
<dbReference type="GO" id="GO:0050518">
    <property type="term" value="F:2-C-methyl-D-erythritol 4-phosphate cytidylyltransferase activity"/>
    <property type="evidence" value="ECO:0007669"/>
    <property type="project" value="UniProtKB-UniRule"/>
</dbReference>
<dbReference type="GO" id="GO:0019288">
    <property type="term" value="P:isopentenyl diphosphate biosynthetic process, methylerythritol 4-phosphate pathway"/>
    <property type="evidence" value="ECO:0007669"/>
    <property type="project" value="UniProtKB-UniRule"/>
</dbReference>
<dbReference type="CDD" id="cd02516">
    <property type="entry name" value="CDP-ME_synthetase"/>
    <property type="match status" value="1"/>
</dbReference>
<dbReference type="FunFam" id="3.90.550.10:FF:000003">
    <property type="entry name" value="2-C-methyl-D-erythritol 4-phosphate cytidylyltransferase"/>
    <property type="match status" value="1"/>
</dbReference>
<dbReference type="Gene3D" id="3.90.550.10">
    <property type="entry name" value="Spore Coat Polysaccharide Biosynthesis Protein SpsA, Chain A"/>
    <property type="match status" value="1"/>
</dbReference>
<dbReference type="HAMAP" id="MF_00108">
    <property type="entry name" value="IspD"/>
    <property type="match status" value="1"/>
</dbReference>
<dbReference type="InterPro" id="IPR001228">
    <property type="entry name" value="IspD"/>
</dbReference>
<dbReference type="InterPro" id="IPR034683">
    <property type="entry name" value="IspD/TarI"/>
</dbReference>
<dbReference type="InterPro" id="IPR050088">
    <property type="entry name" value="IspD/TarI_cytidylyltransf_bact"/>
</dbReference>
<dbReference type="InterPro" id="IPR018294">
    <property type="entry name" value="ISPD_synthase_CS"/>
</dbReference>
<dbReference type="InterPro" id="IPR029044">
    <property type="entry name" value="Nucleotide-diphossugar_trans"/>
</dbReference>
<dbReference type="NCBIfam" id="TIGR00453">
    <property type="entry name" value="ispD"/>
    <property type="match status" value="1"/>
</dbReference>
<dbReference type="PANTHER" id="PTHR32125">
    <property type="entry name" value="2-C-METHYL-D-ERYTHRITOL 4-PHOSPHATE CYTIDYLYLTRANSFERASE, CHLOROPLASTIC"/>
    <property type="match status" value="1"/>
</dbReference>
<dbReference type="PANTHER" id="PTHR32125:SF4">
    <property type="entry name" value="2-C-METHYL-D-ERYTHRITOL 4-PHOSPHATE CYTIDYLYLTRANSFERASE, CHLOROPLASTIC"/>
    <property type="match status" value="1"/>
</dbReference>
<dbReference type="Pfam" id="PF01128">
    <property type="entry name" value="IspD"/>
    <property type="match status" value="1"/>
</dbReference>
<dbReference type="SUPFAM" id="SSF53448">
    <property type="entry name" value="Nucleotide-diphospho-sugar transferases"/>
    <property type="match status" value="1"/>
</dbReference>
<dbReference type="PROSITE" id="PS01295">
    <property type="entry name" value="ISPD"/>
    <property type="match status" value="1"/>
</dbReference>
<proteinExistence type="inferred from homology"/>